<gene>
    <name type="ordered locus">LPC_2650</name>
</gene>
<feature type="chain" id="PRO_0000391038" description="UPF0761 membrane protein LPC_2650">
    <location>
        <begin position="1"/>
        <end position="412"/>
    </location>
</feature>
<feature type="transmembrane region" description="Helical" evidence="1">
    <location>
        <begin position="36"/>
        <end position="56"/>
    </location>
</feature>
<feature type="transmembrane region" description="Helical" evidence="1">
    <location>
        <begin position="99"/>
        <end position="119"/>
    </location>
</feature>
<feature type="transmembrane region" description="Helical" evidence="1">
    <location>
        <begin position="137"/>
        <end position="157"/>
    </location>
</feature>
<feature type="transmembrane region" description="Helical" evidence="1">
    <location>
        <begin position="177"/>
        <end position="197"/>
    </location>
</feature>
<feature type="transmembrane region" description="Helical" evidence="1">
    <location>
        <begin position="210"/>
        <end position="230"/>
    </location>
</feature>
<feature type="transmembrane region" description="Helical" evidence="1">
    <location>
        <begin position="241"/>
        <end position="261"/>
    </location>
</feature>
<proteinExistence type="inferred from homology"/>
<accession>A5IGR4</accession>
<sequence>MNWKEKVKTKFYSCDRFVRFVIQHFIQDDCTYIASALAFTSLLAVVPLMSVGLAIFSSFPVFQGLAEPVQNFIFDNFVPATGKIVQSYLQQFTSQVSKLSIWGVVFLIFTALLVMFTIERAMNKIWRVSSSRHGVSAFLLYWAIISLAPVLLGLSLAASSYLFSMPILADHRAPYTILHYSPFFLSLIGFTFLYVVVPNCPVKIRHAFWGGLVAAILFESAKHAFAYYLIRYNTYELLYGAFATVPIFFIWVYWVWIITLLGAEISYAFSVHHQRRGGKSLDGFSHALLWLHQLWIAQQHGKGLSFNDLVDASKQPFAVDVDEMINALIYHELIHATADGHYMLSRDLSHVTLYDLTQLLPYRLPTHLELQYSKASLSEQWRAAFKRHNEELKKSLDINLEELFKKTGTILK</sequence>
<dbReference type="EMBL" id="CP000675">
    <property type="protein sequence ID" value="ABQ56564.1"/>
    <property type="molecule type" value="Genomic_DNA"/>
</dbReference>
<dbReference type="RefSeq" id="WP_011945803.1">
    <property type="nucleotide sequence ID" value="NC_009494.2"/>
</dbReference>
<dbReference type="SMR" id="A5IGR4"/>
<dbReference type="KEGG" id="lpc:LPC_2650"/>
<dbReference type="HOGENOM" id="CLU_032288_1_0_6"/>
<dbReference type="GO" id="GO:0005886">
    <property type="term" value="C:plasma membrane"/>
    <property type="evidence" value="ECO:0007669"/>
    <property type="project" value="UniProtKB-SubCell"/>
</dbReference>
<dbReference type="HAMAP" id="MF_00672">
    <property type="entry name" value="UPF0761"/>
    <property type="match status" value="1"/>
</dbReference>
<dbReference type="InterPro" id="IPR023679">
    <property type="entry name" value="UPF0761_bac"/>
</dbReference>
<dbReference type="InterPro" id="IPR017039">
    <property type="entry name" value="Virul_fac_BrkB"/>
</dbReference>
<dbReference type="NCBIfam" id="TIGR00765">
    <property type="entry name" value="yihY_not_rbn"/>
    <property type="match status" value="1"/>
</dbReference>
<dbReference type="PANTHER" id="PTHR30213">
    <property type="entry name" value="INNER MEMBRANE PROTEIN YHJD"/>
    <property type="match status" value="1"/>
</dbReference>
<dbReference type="PANTHER" id="PTHR30213:SF0">
    <property type="entry name" value="UPF0761 MEMBRANE PROTEIN YIHY"/>
    <property type="match status" value="1"/>
</dbReference>
<dbReference type="Pfam" id="PF03631">
    <property type="entry name" value="Virul_fac_BrkB"/>
    <property type="match status" value="1"/>
</dbReference>
<organism>
    <name type="scientific">Legionella pneumophila (strain Corby)</name>
    <dbReference type="NCBI Taxonomy" id="400673"/>
    <lineage>
        <taxon>Bacteria</taxon>
        <taxon>Pseudomonadati</taxon>
        <taxon>Pseudomonadota</taxon>
        <taxon>Gammaproteobacteria</taxon>
        <taxon>Legionellales</taxon>
        <taxon>Legionellaceae</taxon>
        <taxon>Legionella</taxon>
    </lineage>
</organism>
<protein>
    <recommendedName>
        <fullName evidence="1">UPF0761 membrane protein LPC_2650</fullName>
    </recommendedName>
</protein>
<reference key="1">
    <citation type="submission" date="2006-11" db="EMBL/GenBank/DDBJ databases">
        <title>Identification and characterization of a new conjugation/ type IVA secretion system (trb/tra) of L. pneumophila Corby localized on a mobile genomic island.</title>
        <authorList>
            <person name="Gloeckner G."/>
            <person name="Albert-Weissenberger C."/>
            <person name="Weinmann E."/>
            <person name="Jacobi S."/>
            <person name="Schunder E."/>
            <person name="Steinert M."/>
            <person name="Buchrieser C."/>
            <person name="Hacker J."/>
            <person name="Heuner K."/>
        </authorList>
    </citation>
    <scope>NUCLEOTIDE SEQUENCE [LARGE SCALE GENOMIC DNA]</scope>
    <source>
        <strain>Corby</strain>
    </source>
</reference>
<name>Y2650_LEGPC</name>
<comment type="subcellular location">
    <subcellularLocation>
        <location evidence="1">Cell inner membrane</location>
        <topology evidence="1">Multi-pass membrane protein</topology>
    </subcellularLocation>
</comment>
<comment type="similarity">
    <text evidence="1">Belongs to the UPF0761 family.</text>
</comment>
<keyword id="KW-0997">Cell inner membrane</keyword>
<keyword id="KW-1003">Cell membrane</keyword>
<keyword id="KW-0472">Membrane</keyword>
<keyword id="KW-0812">Transmembrane</keyword>
<keyword id="KW-1133">Transmembrane helix</keyword>
<evidence type="ECO:0000255" key="1">
    <source>
        <dbReference type="HAMAP-Rule" id="MF_00672"/>
    </source>
</evidence>